<keyword id="KW-0378">Hydrolase</keyword>
<keyword id="KW-1185">Reference proteome</keyword>
<gene>
    <name type="primary">NIT4</name>
    <name type="ordered locus">Os02g0635200</name>
    <name type="ordered locus">LOC_Os02g42350</name>
    <name type="ORF">OJ1626_B09.8</name>
    <name type="ORF">OsJ_007404</name>
</gene>
<organism>
    <name type="scientific">Oryza sativa subsp. japonica</name>
    <name type="common">Rice</name>
    <dbReference type="NCBI Taxonomy" id="39947"/>
    <lineage>
        <taxon>Eukaryota</taxon>
        <taxon>Viridiplantae</taxon>
        <taxon>Streptophyta</taxon>
        <taxon>Embryophyta</taxon>
        <taxon>Tracheophyta</taxon>
        <taxon>Spermatophyta</taxon>
        <taxon>Magnoliopsida</taxon>
        <taxon>Liliopsida</taxon>
        <taxon>Poales</taxon>
        <taxon>Poaceae</taxon>
        <taxon>BOP clade</taxon>
        <taxon>Oryzoideae</taxon>
        <taxon>Oryzeae</taxon>
        <taxon>Oryzinae</taxon>
        <taxon>Oryza</taxon>
        <taxon>Oryza sativa</taxon>
    </lineage>
</organism>
<protein>
    <recommendedName>
        <fullName>Bifunctional nitrilase/nitrile hydratase NIT4</fullName>
        <shortName>OsNIT4</shortName>
        <ecNumber>3.5.5.1</ecNumber>
        <ecNumber>3.5.5.4</ecNumber>
    </recommendedName>
    <alternativeName>
        <fullName>Cyanoalanine nitrilase</fullName>
    </alternativeName>
    <alternativeName>
        <fullName>Nitrilase 4</fullName>
    </alternativeName>
</protein>
<reference key="1">
    <citation type="submission" date="1999-05" db="EMBL/GenBank/DDBJ databases">
        <title>Oryza sativa, a gene for nitrilase-like protein.</title>
        <authorList>
            <person name="Chiba R."/>
            <person name="Dohmoto M."/>
            <person name="Yamaguchi K."/>
        </authorList>
    </citation>
    <scope>NUCLEOTIDE SEQUENCE [MRNA]</scope>
    <source>
        <strain>cv. Nipponbare</strain>
        <tissue>Leaf</tissue>
    </source>
</reference>
<reference key="2">
    <citation type="journal article" date="2005" name="Nature">
        <title>The map-based sequence of the rice genome.</title>
        <authorList>
            <consortium name="International rice genome sequencing project (IRGSP)"/>
        </authorList>
    </citation>
    <scope>NUCLEOTIDE SEQUENCE [LARGE SCALE GENOMIC DNA]</scope>
    <source>
        <strain>cv. Nipponbare</strain>
    </source>
</reference>
<reference key="3">
    <citation type="journal article" date="2008" name="Nucleic Acids Res.">
        <title>The rice annotation project database (RAP-DB): 2008 update.</title>
        <authorList>
            <consortium name="The rice annotation project (RAP)"/>
        </authorList>
    </citation>
    <scope>GENOME REANNOTATION</scope>
    <source>
        <strain>cv. Nipponbare</strain>
    </source>
</reference>
<reference key="4">
    <citation type="journal article" date="2013" name="Rice">
        <title>Improvement of the Oryza sativa Nipponbare reference genome using next generation sequence and optical map data.</title>
        <authorList>
            <person name="Kawahara Y."/>
            <person name="de la Bastide M."/>
            <person name="Hamilton J.P."/>
            <person name="Kanamori H."/>
            <person name="McCombie W.R."/>
            <person name="Ouyang S."/>
            <person name="Schwartz D.C."/>
            <person name="Tanaka T."/>
            <person name="Wu J."/>
            <person name="Zhou S."/>
            <person name="Childs K.L."/>
            <person name="Davidson R.M."/>
            <person name="Lin H."/>
            <person name="Quesada-Ocampo L."/>
            <person name="Vaillancourt B."/>
            <person name="Sakai H."/>
            <person name="Lee S.S."/>
            <person name="Kim J."/>
            <person name="Numa H."/>
            <person name="Itoh T."/>
            <person name="Buell C.R."/>
            <person name="Matsumoto T."/>
        </authorList>
    </citation>
    <scope>GENOME REANNOTATION</scope>
    <source>
        <strain>cv. Nipponbare</strain>
    </source>
</reference>
<reference key="5">
    <citation type="journal article" date="2005" name="PLoS Biol.">
        <title>The genomes of Oryza sativa: a history of duplications.</title>
        <authorList>
            <person name="Yu J."/>
            <person name="Wang J."/>
            <person name="Lin W."/>
            <person name="Li S."/>
            <person name="Li H."/>
            <person name="Zhou J."/>
            <person name="Ni P."/>
            <person name="Dong W."/>
            <person name="Hu S."/>
            <person name="Zeng C."/>
            <person name="Zhang J."/>
            <person name="Zhang Y."/>
            <person name="Li R."/>
            <person name="Xu Z."/>
            <person name="Li S."/>
            <person name="Li X."/>
            <person name="Zheng H."/>
            <person name="Cong L."/>
            <person name="Lin L."/>
            <person name="Yin J."/>
            <person name="Geng J."/>
            <person name="Li G."/>
            <person name="Shi J."/>
            <person name="Liu J."/>
            <person name="Lv H."/>
            <person name="Li J."/>
            <person name="Wang J."/>
            <person name="Deng Y."/>
            <person name="Ran L."/>
            <person name="Shi X."/>
            <person name="Wang X."/>
            <person name="Wu Q."/>
            <person name="Li C."/>
            <person name="Ren X."/>
            <person name="Wang J."/>
            <person name="Wang X."/>
            <person name="Li D."/>
            <person name="Liu D."/>
            <person name="Zhang X."/>
            <person name="Ji Z."/>
            <person name="Zhao W."/>
            <person name="Sun Y."/>
            <person name="Zhang Z."/>
            <person name="Bao J."/>
            <person name="Han Y."/>
            <person name="Dong L."/>
            <person name="Ji J."/>
            <person name="Chen P."/>
            <person name="Wu S."/>
            <person name="Liu J."/>
            <person name="Xiao Y."/>
            <person name="Bu D."/>
            <person name="Tan J."/>
            <person name="Yang L."/>
            <person name="Ye C."/>
            <person name="Zhang J."/>
            <person name="Xu J."/>
            <person name="Zhou Y."/>
            <person name="Yu Y."/>
            <person name="Zhang B."/>
            <person name="Zhuang S."/>
            <person name="Wei H."/>
            <person name="Liu B."/>
            <person name="Lei M."/>
            <person name="Yu H."/>
            <person name="Li Y."/>
            <person name="Xu H."/>
            <person name="Wei S."/>
            <person name="He X."/>
            <person name="Fang L."/>
            <person name="Zhang Z."/>
            <person name="Zhang Y."/>
            <person name="Huang X."/>
            <person name="Su Z."/>
            <person name="Tong W."/>
            <person name="Li J."/>
            <person name="Tong Z."/>
            <person name="Li S."/>
            <person name="Ye J."/>
            <person name="Wang L."/>
            <person name="Fang L."/>
            <person name="Lei T."/>
            <person name="Chen C.-S."/>
            <person name="Chen H.-C."/>
            <person name="Xu Z."/>
            <person name="Li H."/>
            <person name="Huang H."/>
            <person name="Zhang F."/>
            <person name="Xu H."/>
            <person name="Li N."/>
            <person name="Zhao C."/>
            <person name="Li S."/>
            <person name="Dong L."/>
            <person name="Huang Y."/>
            <person name="Li L."/>
            <person name="Xi Y."/>
            <person name="Qi Q."/>
            <person name="Li W."/>
            <person name="Zhang B."/>
            <person name="Hu W."/>
            <person name="Zhang Y."/>
            <person name="Tian X."/>
            <person name="Jiao Y."/>
            <person name="Liang X."/>
            <person name="Jin J."/>
            <person name="Gao L."/>
            <person name="Zheng W."/>
            <person name="Hao B."/>
            <person name="Liu S.-M."/>
            <person name="Wang W."/>
            <person name="Yuan L."/>
            <person name="Cao M."/>
            <person name="McDermott J."/>
            <person name="Samudrala R."/>
            <person name="Wang J."/>
            <person name="Wong G.K.-S."/>
            <person name="Yang H."/>
        </authorList>
    </citation>
    <scope>NUCLEOTIDE SEQUENCE [LARGE SCALE GENOMIC DNA]</scope>
    <source>
        <strain>cv. Nipponbare</strain>
    </source>
</reference>
<reference key="6">
    <citation type="journal article" date="2003" name="Science">
        <title>Collection, mapping, and annotation of over 28,000 cDNA clones from japonica rice.</title>
        <authorList>
            <consortium name="The rice full-length cDNA consortium"/>
        </authorList>
    </citation>
    <scope>NUCLEOTIDE SEQUENCE [LARGE SCALE MRNA]</scope>
    <source>
        <strain>cv. Nipponbare</strain>
    </source>
</reference>
<accession>Q6H849</accession>
<accession>A3A9D2</accession>
<accession>B7EVI5</accession>
<accession>Q9SXX6</accession>
<evidence type="ECO:0000250" key="1"/>
<evidence type="ECO:0000255" key="2">
    <source>
        <dbReference type="PROSITE-ProRule" id="PRU00054"/>
    </source>
</evidence>
<evidence type="ECO:0000255" key="3">
    <source>
        <dbReference type="PROSITE-ProRule" id="PRU10105"/>
    </source>
</evidence>
<evidence type="ECO:0000305" key="4"/>
<sequence length="362" mass="38676">MAMVPSGSGGGPPVIAEVEMNGGADSGAATVRATVVQASTVFYDTPATLDKAERLIEEAAGYGSQLVVFPEAFVGGYPRGSTFGFGANISIGNPKDKGKEEFRKYHAAAIEVPGPEVTRLAAMAGKYKVFLVMGVIEREGYTLYCSVLFFDPLGRYLGKHRKLMPTALERIIWGFGDGSTIPVYDTPLGKIGALICWENKMPLLRTALYGKGIEIYCAPTADSRQVWQASMTHIALEGGCFVLSANQFCRRKDYPPPPEYVFSGLGEEPSPDTVVCPGGSVIISPSGEVLAGPNYEGEALITADLDLGEIVRAKFDFDVVGHYARPEVLSLVVNDQPHLPVSFTSAAEKTTAAKSDSTAKPY</sequence>
<comment type="function">
    <text evidence="1">Highly specific for beta-cyano-L-alanine (Ala(CN)). Low activity with 3-phenylpropionitrile (PPN). Not associated with auxin production but may be involved in cyanide detoxification (By similarity).</text>
</comment>
<comment type="catalytic activity">
    <reaction evidence="3">
        <text>a nitrile + 2 H2O = a carboxylate + NH4(+)</text>
        <dbReference type="Rhea" id="RHEA:21724"/>
        <dbReference type="ChEBI" id="CHEBI:15377"/>
        <dbReference type="ChEBI" id="CHEBI:18379"/>
        <dbReference type="ChEBI" id="CHEBI:28938"/>
        <dbReference type="ChEBI" id="CHEBI:29067"/>
        <dbReference type="EC" id="3.5.5.1"/>
    </reaction>
</comment>
<comment type="catalytic activity">
    <reaction>
        <text>3-cyano-L-alanine + 2 H2O = L-aspartate + NH4(+)</text>
        <dbReference type="Rhea" id="RHEA:11188"/>
        <dbReference type="ChEBI" id="CHEBI:15377"/>
        <dbReference type="ChEBI" id="CHEBI:28938"/>
        <dbReference type="ChEBI" id="CHEBI:29991"/>
        <dbReference type="ChEBI" id="CHEBI:77860"/>
        <dbReference type="EC" id="3.5.5.4"/>
    </reaction>
</comment>
<comment type="similarity">
    <text evidence="4">Belongs to the carbon-nitrogen hydrolase superfamily. Nitrilase family.</text>
</comment>
<comment type="sequence caution" evidence="4">
    <conflict type="erroneous gene model prediction">
        <sequence resource="EMBL-CDS" id="EAZ23921"/>
    </conflict>
</comment>
<proteinExistence type="evidence at transcript level"/>
<name>NRL4_ORYSJ</name>
<dbReference type="EC" id="3.5.5.1"/>
<dbReference type="EC" id="3.5.5.4"/>
<dbReference type="EMBL" id="AB027054">
    <property type="protein sequence ID" value="BAA77679.1"/>
    <property type="molecule type" value="mRNA"/>
</dbReference>
<dbReference type="EMBL" id="AP004069">
    <property type="protein sequence ID" value="BAD25100.1"/>
    <property type="molecule type" value="Genomic_DNA"/>
</dbReference>
<dbReference type="EMBL" id="AP008208">
    <property type="protein sequence ID" value="BAF09432.1"/>
    <property type="molecule type" value="Genomic_DNA"/>
</dbReference>
<dbReference type="EMBL" id="AP014958">
    <property type="protein sequence ID" value="BAS79936.1"/>
    <property type="molecule type" value="Genomic_DNA"/>
</dbReference>
<dbReference type="EMBL" id="CM000139">
    <property type="protein sequence ID" value="EAZ23921.1"/>
    <property type="status" value="ALT_SEQ"/>
    <property type="molecule type" value="Genomic_DNA"/>
</dbReference>
<dbReference type="EMBL" id="AK104033">
    <property type="protein sequence ID" value="BAG96382.1"/>
    <property type="molecule type" value="mRNA"/>
</dbReference>
<dbReference type="EMBL" id="AK121244">
    <property type="protein sequence ID" value="BAH00392.1"/>
    <property type="molecule type" value="mRNA"/>
</dbReference>
<dbReference type="PIR" id="T52266">
    <property type="entry name" value="T52266"/>
</dbReference>
<dbReference type="RefSeq" id="XP_015622782.1">
    <property type="nucleotide sequence ID" value="XM_015767296.1"/>
</dbReference>
<dbReference type="SMR" id="Q6H849"/>
<dbReference type="FunCoup" id="Q6H849">
    <property type="interactions" value="183"/>
</dbReference>
<dbReference type="STRING" id="39947.Q6H849"/>
<dbReference type="PaxDb" id="39947-Q6H849"/>
<dbReference type="EnsemblPlants" id="Os02t0635200-01">
    <property type="protein sequence ID" value="Os02t0635200-01"/>
    <property type="gene ID" value="Os02g0635200"/>
</dbReference>
<dbReference type="Gramene" id="Os02t0635200-01">
    <property type="protein sequence ID" value="Os02t0635200-01"/>
    <property type="gene ID" value="Os02g0635200"/>
</dbReference>
<dbReference type="KEGG" id="dosa:Os02g0635200"/>
<dbReference type="eggNOG" id="KOG0805">
    <property type="taxonomic scope" value="Eukaryota"/>
</dbReference>
<dbReference type="HOGENOM" id="CLU_030130_6_1_1"/>
<dbReference type="InParanoid" id="Q6H849"/>
<dbReference type="OMA" id="HIAVWPG"/>
<dbReference type="OrthoDB" id="10250282at2759"/>
<dbReference type="PlantReactome" id="R-OSA-1119486">
    <property type="pathway name" value="IAA biosynthesis I"/>
</dbReference>
<dbReference type="Proteomes" id="UP000000763">
    <property type="component" value="Chromosome 2"/>
</dbReference>
<dbReference type="Proteomes" id="UP000007752">
    <property type="component" value="Chromosome 2"/>
</dbReference>
<dbReference type="Proteomes" id="UP000059680">
    <property type="component" value="Chromosome 2"/>
</dbReference>
<dbReference type="GO" id="GO:0047427">
    <property type="term" value="F:cyanoalanine nitrilase activity"/>
    <property type="evidence" value="ECO:0007669"/>
    <property type="project" value="UniProtKB-EC"/>
</dbReference>
<dbReference type="GO" id="GO:0000257">
    <property type="term" value="F:nitrilase activity"/>
    <property type="evidence" value="ECO:0000318"/>
    <property type="project" value="GO_Central"/>
</dbReference>
<dbReference type="GO" id="GO:0018822">
    <property type="term" value="F:nitrile hydratase activity"/>
    <property type="evidence" value="ECO:0000318"/>
    <property type="project" value="GO_Central"/>
</dbReference>
<dbReference type="GO" id="GO:0051410">
    <property type="term" value="P:detoxification of nitrogen compound"/>
    <property type="evidence" value="ECO:0000318"/>
    <property type="project" value="GO_Central"/>
</dbReference>
<dbReference type="CDD" id="cd07564">
    <property type="entry name" value="nitrilases_CHs"/>
    <property type="match status" value="1"/>
</dbReference>
<dbReference type="FunFam" id="3.60.110.10:FF:000006">
    <property type="entry name" value="Bifunctional nitrilase/nitrile hydratase NIT4B"/>
    <property type="match status" value="1"/>
</dbReference>
<dbReference type="Gene3D" id="3.60.110.10">
    <property type="entry name" value="Carbon-nitrogen hydrolase"/>
    <property type="match status" value="1"/>
</dbReference>
<dbReference type="InterPro" id="IPR003010">
    <property type="entry name" value="C-N_Hydrolase"/>
</dbReference>
<dbReference type="InterPro" id="IPR036526">
    <property type="entry name" value="C-N_Hydrolase_sf"/>
</dbReference>
<dbReference type="InterPro" id="IPR000132">
    <property type="entry name" value="Nitrilase/CN_hydratase_CS"/>
</dbReference>
<dbReference type="InterPro" id="IPR044149">
    <property type="entry name" value="Nitrilases_CHs"/>
</dbReference>
<dbReference type="PANTHER" id="PTHR46044:SF1">
    <property type="entry name" value="CN HYDROLASE DOMAIN-CONTAINING PROTEIN"/>
    <property type="match status" value="1"/>
</dbReference>
<dbReference type="PANTHER" id="PTHR46044">
    <property type="entry name" value="NITRILASE"/>
    <property type="match status" value="1"/>
</dbReference>
<dbReference type="Pfam" id="PF00795">
    <property type="entry name" value="CN_hydrolase"/>
    <property type="match status" value="1"/>
</dbReference>
<dbReference type="SUPFAM" id="SSF56317">
    <property type="entry name" value="Carbon-nitrogen hydrolase"/>
    <property type="match status" value="1"/>
</dbReference>
<dbReference type="PROSITE" id="PS50263">
    <property type="entry name" value="CN_HYDROLASE"/>
    <property type="match status" value="1"/>
</dbReference>
<dbReference type="PROSITE" id="PS00920">
    <property type="entry name" value="NITRIL_CHT_1"/>
    <property type="match status" value="1"/>
</dbReference>
<dbReference type="PROSITE" id="PS00921">
    <property type="entry name" value="NITRIL_CHT_2"/>
    <property type="match status" value="1"/>
</dbReference>
<feature type="chain" id="PRO_0000352513" description="Bifunctional nitrilase/nitrile hydratase NIT4">
    <location>
        <begin position="1"/>
        <end position="362"/>
    </location>
</feature>
<feature type="domain" description="CN hydrolase" evidence="2">
    <location>
        <begin position="31"/>
        <end position="307"/>
    </location>
</feature>
<feature type="active site" description="Proton acceptor" evidence="2">
    <location>
        <position position="71"/>
    </location>
</feature>
<feature type="active site" description="Proton donor" evidence="2">
    <location>
        <position position="162"/>
    </location>
</feature>
<feature type="active site" description="Nucleophile" evidence="2 3">
    <location>
        <position position="196"/>
    </location>
</feature>
<feature type="sequence conflict" description="In Ref. 1; BAA77679." evidence="4" ref="1">
    <original>D</original>
    <variation>T</variation>
    <location>
        <position position="25"/>
    </location>
</feature>
<feature type="sequence conflict" description="In Ref. 1; BAA77679." evidence="4" ref="1">
    <original>S</original>
    <variation>T</variation>
    <location>
        <position position="263"/>
    </location>
</feature>